<feature type="chain" id="PRO_0000424706" description="NDR1/HIN1-like protein 10">
    <location>
        <begin position="1"/>
        <end position="227"/>
    </location>
</feature>
<feature type="transmembrane region" description="Helical" evidence="3">
    <location>
        <begin position="42"/>
        <end position="62"/>
    </location>
</feature>
<feature type="glycosylation site" description="N-linked (GlcNAc...) asparagine" evidence="4">
    <location>
        <position position="138"/>
    </location>
</feature>
<feature type="glycosylation site" description="N-linked (GlcNAc...) asparagine" evidence="4">
    <location>
        <position position="210"/>
    </location>
</feature>
<organism>
    <name type="scientific">Arabidopsis thaliana</name>
    <name type="common">Mouse-ear cress</name>
    <dbReference type="NCBI Taxonomy" id="3702"/>
    <lineage>
        <taxon>Eukaryota</taxon>
        <taxon>Viridiplantae</taxon>
        <taxon>Streptophyta</taxon>
        <taxon>Embryophyta</taxon>
        <taxon>Tracheophyta</taxon>
        <taxon>Spermatophyta</taxon>
        <taxon>Magnoliopsida</taxon>
        <taxon>eudicotyledons</taxon>
        <taxon>Gunneridae</taxon>
        <taxon>Pentapetalae</taxon>
        <taxon>rosids</taxon>
        <taxon>malvids</taxon>
        <taxon>Brassicales</taxon>
        <taxon>Brassicaceae</taxon>
        <taxon>Camelineae</taxon>
        <taxon>Arabidopsis</taxon>
    </lineage>
</organism>
<keyword id="KW-1003">Cell membrane</keyword>
<keyword id="KW-0325">Glycoprotein</keyword>
<keyword id="KW-0472">Membrane</keyword>
<keyword id="KW-0611">Plant defense</keyword>
<keyword id="KW-1185">Reference proteome</keyword>
<keyword id="KW-0812">Transmembrane</keyword>
<keyword id="KW-1133">Transmembrane helix</keyword>
<dbReference type="EMBL" id="AB047812">
    <property type="protein sequence ID" value="BAB32889.1"/>
    <property type="molecule type" value="mRNA"/>
</dbReference>
<dbReference type="EMBL" id="AC007017">
    <property type="protein sequence ID" value="AAD21459.1"/>
    <property type="molecule type" value="Genomic_DNA"/>
</dbReference>
<dbReference type="EMBL" id="CP002685">
    <property type="protein sequence ID" value="AEC09185.1"/>
    <property type="molecule type" value="Genomic_DNA"/>
</dbReference>
<dbReference type="EMBL" id="BT002875">
    <property type="protein sequence ID" value="AAO22692.1"/>
    <property type="molecule type" value="mRNA"/>
</dbReference>
<dbReference type="EMBL" id="BT004400">
    <property type="protein sequence ID" value="AAO42394.1"/>
    <property type="molecule type" value="mRNA"/>
</dbReference>
<dbReference type="EMBL" id="AY086633">
    <property type="protein sequence ID" value="AAM63691.1"/>
    <property type="molecule type" value="mRNA"/>
</dbReference>
<dbReference type="PIR" id="D84775">
    <property type="entry name" value="D84775"/>
</dbReference>
<dbReference type="RefSeq" id="NP_181142.1">
    <property type="nucleotide sequence ID" value="NM_129157.3"/>
</dbReference>
<dbReference type="FunCoup" id="Q9SJ52">
    <property type="interactions" value="54"/>
</dbReference>
<dbReference type="STRING" id="3702.Q9SJ52"/>
<dbReference type="GlyCosmos" id="Q9SJ52">
    <property type="glycosylation" value="2 sites, No reported glycans"/>
</dbReference>
<dbReference type="GlyGen" id="Q9SJ52">
    <property type="glycosylation" value="2 sites"/>
</dbReference>
<dbReference type="iPTMnet" id="Q9SJ52"/>
<dbReference type="SwissPalm" id="Q9SJ52"/>
<dbReference type="PaxDb" id="3702-AT2G35980.1"/>
<dbReference type="ProteomicsDB" id="249381"/>
<dbReference type="EnsemblPlants" id="AT2G35980.1">
    <property type="protein sequence ID" value="AT2G35980.1"/>
    <property type="gene ID" value="AT2G35980"/>
</dbReference>
<dbReference type="GeneID" id="818171"/>
<dbReference type="Gramene" id="AT2G35980.1">
    <property type="protein sequence ID" value="AT2G35980.1"/>
    <property type="gene ID" value="AT2G35980"/>
</dbReference>
<dbReference type="KEGG" id="ath:AT2G35980"/>
<dbReference type="Araport" id="AT2G35980"/>
<dbReference type="TAIR" id="AT2G35980">
    <property type="gene designation" value="YLS9"/>
</dbReference>
<dbReference type="eggNOG" id="ENOG502QUR9">
    <property type="taxonomic scope" value="Eukaryota"/>
</dbReference>
<dbReference type="HOGENOM" id="CLU_051752_2_0_1"/>
<dbReference type="InParanoid" id="Q9SJ52"/>
<dbReference type="OMA" id="TKPKVNC"/>
<dbReference type="OrthoDB" id="1889094at2759"/>
<dbReference type="PhylomeDB" id="Q9SJ52"/>
<dbReference type="PRO" id="PR:Q9SJ52"/>
<dbReference type="Proteomes" id="UP000006548">
    <property type="component" value="Chromosome 2"/>
</dbReference>
<dbReference type="ExpressionAtlas" id="Q9SJ52">
    <property type="expression patterns" value="baseline and differential"/>
</dbReference>
<dbReference type="GO" id="GO:0009507">
    <property type="term" value="C:chloroplast"/>
    <property type="evidence" value="ECO:0000314"/>
    <property type="project" value="TAIR"/>
</dbReference>
<dbReference type="GO" id="GO:0005886">
    <property type="term" value="C:plasma membrane"/>
    <property type="evidence" value="ECO:0007669"/>
    <property type="project" value="UniProtKB-SubCell"/>
</dbReference>
<dbReference type="GO" id="GO:0051607">
    <property type="term" value="P:defense response to virus"/>
    <property type="evidence" value="ECO:0000270"/>
    <property type="project" value="TAIR"/>
</dbReference>
<dbReference type="GO" id="GO:0010150">
    <property type="term" value="P:leaf senescence"/>
    <property type="evidence" value="ECO:0000315"/>
    <property type="project" value="TAIR"/>
</dbReference>
<dbReference type="GO" id="GO:0051707">
    <property type="term" value="P:response to other organism"/>
    <property type="evidence" value="ECO:0000304"/>
    <property type="project" value="TAIR"/>
</dbReference>
<dbReference type="InterPro" id="IPR004864">
    <property type="entry name" value="LEA_2"/>
</dbReference>
<dbReference type="InterPro" id="IPR044839">
    <property type="entry name" value="NDR1-like"/>
</dbReference>
<dbReference type="PANTHER" id="PTHR31415:SF174">
    <property type="entry name" value="NDR1_HIN1-LIKE PROTEIN 10"/>
    <property type="match status" value="1"/>
</dbReference>
<dbReference type="PANTHER" id="PTHR31415">
    <property type="entry name" value="OS05G0367900 PROTEIN"/>
    <property type="match status" value="1"/>
</dbReference>
<dbReference type="Pfam" id="PF03168">
    <property type="entry name" value="LEA_2"/>
    <property type="match status" value="1"/>
</dbReference>
<sequence length="227" mass="25659">MAAEQPLNGAFYGPSVPPPAPKGYYRRGHGRGCGCCLLSLFVKVIISLIVILGVAALIFWLIVRPRAIKFHVTDASLTRFDHTSPDNILRYNLALTVPVRNPNKRIGLYYDRIEAHAYYEGKRFSTITLTPFYQGHKNTTVLTPTFQGQNLVIFNAGQSRTLNAERISGVYNIEIKFRLRVRFKLGDLKFRRIKPKVDCDDLRLPLSTSNGTTTTSTVFPIKCDFDF</sequence>
<evidence type="ECO:0000250" key="1">
    <source>
        <dbReference type="UniProtKB" id="Q9FNH6"/>
    </source>
</evidence>
<evidence type="ECO:0000250" key="2">
    <source>
        <dbReference type="UniProtKB" id="Q9ZVD2"/>
    </source>
</evidence>
<evidence type="ECO:0000255" key="3"/>
<evidence type="ECO:0000255" key="4">
    <source>
        <dbReference type="PROSITE-ProRule" id="PRU00498"/>
    </source>
</evidence>
<evidence type="ECO:0000269" key="5">
    <source>
    </source>
</evidence>
<evidence type="ECO:0000269" key="6">
    <source>
    </source>
</evidence>
<evidence type="ECO:0000269" key="7">
    <source>
    </source>
</evidence>
<evidence type="ECO:0000269" key="8">
    <source>
    </source>
</evidence>
<evidence type="ECO:0000303" key="9">
    <source>
    </source>
</evidence>
<evidence type="ECO:0000303" key="10">
    <source>
    </source>
</evidence>
<evidence type="ECO:0000305" key="11"/>
<name>NHL10_ARATH</name>
<protein>
    <recommendedName>
        <fullName evidence="10">NDR1/HIN1-like protein 10</fullName>
        <shortName evidence="11">AtNHL10</shortName>
    </recommendedName>
    <alternativeName>
        <fullName evidence="9">Protein YELLOW-LEAF-SPECIFIC GENE 9</fullName>
    </alternativeName>
</protein>
<proteinExistence type="evidence at transcript level"/>
<gene>
    <name evidence="10" type="primary">NHL10</name>
    <name evidence="9" type="synonym">YLS9</name>
    <name type="ordered locus">At2g35980</name>
    <name type="ORF">F11F19.11</name>
</gene>
<reference key="1">
    <citation type="journal article" date="2001" name="Plant Cell Physiol.">
        <title>Isolation and RNA gel blot analysis of genes that could serve as potential molecular markers for leaf senescence in Arabidopsis thaliana.</title>
        <authorList>
            <person name="Yoshida S."/>
            <person name="Ito M."/>
            <person name="Nishida I."/>
            <person name="Watanabe A."/>
        </authorList>
    </citation>
    <scope>NUCLEOTIDE SEQUENCE [MRNA]</scope>
    <scope>TISSUE SPECIFICITY</scope>
    <scope>DEVELOPMENTAL STAGE</scope>
    <scope>INDUCTION</scope>
</reference>
<reference key="2">
    <citation type="journal article" date="1999" name="Nature">
        <title>Sequence and analysis of chromosome 2 of the plant Arabidopsis thaliana.</title>
        <authorList>
            <person name="Lin X."/>
            <person name="Kaul S."/>
            <person name="Rounsley S.D."/>
            <person name="Shea T.P."/>
            <person name="Benito M.-I."/>
            <person name="Town C.D."/>
            <person name="Fujii C.Y."/>
            <person name="Mason T.M."/>
            <person name="Bowman C.L."/>
            <person name="Barnstead M.E."/>
            <person name="Feldblyum T.V."/>
            <person name="Buell C.R."/>
            <person name="Ketchum K.A."/>
            <person name="Lee J.J."/>
            <person name="Ronning C.M."/>
            <person name="Koo H.L."/>
            <person name="Moffat K.S."/>
            <person name="Cronin L.A."/>
            <person name="Shen M."/>
            <person name="Pai G."/>
            <person name="Van Aken S."/>
            <person name="Umayam L."/>
            <person name="Tallon L.J."/>
            <person name="Gill J.E."/>
            <person name="Adams M.D."/>
            <person name="Carrera A.J."/>
            <person name="Creasy T.H."/>
            <person name="Goodman H.M."/>
            <person name="Somerville C.R."/>
            <person name="Copenhaver G.P."/>
            <person name="Preuss D."/>
            <person name="Nierman W.C."/>
            <person name="White O."/>
            <person name="Eisen J.A."/>
            <person name="Salzberg S.L."/>
            <person name="Fraser C.M."/>
            <person name="Venter J.C."/>
        </authorList>
    </citation>
    <scope>NUCLEOTIDE SEQUENCE [LARGE SCALE GENOMIC DNA]</scope>
    <source>
        <strain>cv. Columbia</strain>
    </source>
</reference>
<reference key="3">
    <citation type="journal article" date="2017" name="Plant J.">
        <title>Araport11: a complete reannotation of the Arabidopsis thaliana reference genome.</title>
        <authorList>
            <person name="Cheng C.Y."/>
            <person name="Krishnakumar V."/>
            <person name="Chan A.P."/>
            <person name="Thibaud-Nissen F."/>
            <person name="Schobel S."/>
            <person name="Town C.D."/>
        </authorList>
    </citation>
    <scope>GENOME REANNOTATION</scope>
    <source>
        <strain>cv. Columbia</strain>
    </source>
</reference>
<reference key="4">
    <citation type="journal article" date="2003" name="Science">
        <title>Empirical analysis of transcriptional activity in the Arabidopsis genome.</title>
        <authorList>
            <person name="Yamada K."/>
            <person name="Lim J."/>
            <person name="Dale J.M."/>
            <person name="Chen H."/>
            <person name="Shinn P."/>
            <person name="Palm C.J."/>
            <person name="Southwick A.M."/>
            <person name="Wu H.C."/>
            <person name="Kim C.J."/>
            <person name="Nguyen M."/>
            <person name="Pham P.K."/>
            <person name="Cheuk R.F."/>
            <person name="Karlin-Newmann G."/>
            <person name="Liu S.X."/>
            <person name="Lam B."/>
            <person name="Sakano H."/>
            <person name="Wu T."/>
            <person name="Yu G."/>
            <person name="Miranda M."/>
            <person name="Quach H.L."/>
            <person name="Tripp M."/>
            <person name="Chang C.H."/>
            <person name="Lee J.M."/>
            <person name="Toriumi M.J."/>
            <person name="Chan M.M."/>
            <person name="Tang C.C."/>
            <person name="Onodera C.S."/>
            <person name="Deng J.M."/>
            <person name="Akiyama K."/>
            <person name="Ansari Y."/>
            <person name="Arakawa T."/>
            <person name="Banh J."/>
            <person name="Banno F."/>
            <person name="Bowser L."/>
            <person name="Brooks S.Y."/>
            <person name="Carninci P."/>
            <person name="Chao Q."/>
            <person name="Choy N."/>
            <person name="Enju A."/>
            <person name="Goldsmith A.D."/>
            <person name="Gurjal M."/>
            <person name="Hansen N.F."/>
            <person name="Hayashizaki Y."/>
            <person name="Johnson-Hopson C."/>
            <person name="Hsuan V.W."/>
            <person name="Iida K."/>
            <person name="Karnes M."/>
            <person name="Khan S."/>
            <person name="Koesema E."/>
            <person name="Ishida J."/>
            <person name="Jiang P.X."/>
            <person name="Jones T."/>
            <person name="Kawai J."/>
            <person name="Kamiya A."/>
            <person name="Meyers C."/>
            <person name="Nakajima M."/>
            <person name="Narusaka M."/>
            <person name="Seki M."/>
            <person name="Sakurai T."/>
            <person name="Satou M."/>
            <person name="Tamse R."/>
            <person name="Vaysberg M."/>
            <person name="Wallender E.K."/>
            <person name="Wong C."/>
            <person name="Yamamura Y."/>
            <person name="Yuan S."/>
            <person name="Shinozaki K."/>
            <person name="Davis R.W."/>
            <person name="Theologis A."/>
            <person name="Ecker J.R."/>
        </authorList>
    </citation>
    <scope>NUCLEOTIDE SEQUENCE [LARGE SCALE MRNA]</scope>
    <source>
        <strain>cv. Columbia</strain>
    </source>
</reference>
<reference key="5">
    <citation type="submission" date="2002-03" db="EMBL/GenBank/DDBJ databases">
        <title>Full-length cDNA from Arabidopsis thaliana.</title>
        <authorList>
            <person name="Brover V.V."/>
            <person name="Troukhan M.E."/>
            <person name="Alexandrov N.A."/>
            <person name="Lu Y.-P."/>
            <person name="Flavell R.B."/>
            <person name="Feldmann K.A."/>
        </authorList>
    </citation>
    <scope>NUCLEOTIDE SEQUENCE [LARGE SCALE MRNA]</scope>
</reference>
<reference key="6">
    <citation type="journal article" date="2004" name="Planta">
        <title>Up-regulation of Arabidopsis thaliana NHL10 in the hypersensitive response to Cucumber mosaic virus infection and in senescing leaves is controlled by signalling pathways that differ in salicylate involvement.</title>
        <authorList>
            <person name="Zheng M.S."/>
            <person name="Takahashi H."/>
            <person name="Miyazaki A."/>
            <person name="Hamamoto H."/>
            <person name="Shah J."/>
            <person name="Yamaguchi I."/>
            <person name="Kusano T."/>
        </authorList>
    </citation>
    <scope>TISSUE SPECIFICITY</scope>
    <scope>INDUCTION</scope>
</reference>
<reference key="7">
    <citation type="journal article" date="2013" name="Mol. Plant Pathol.">
        <title>Priming of the Arabidopsis pattern-triggered immunity response upon infection by necrotrophic Pectobacterium carotovorum bacteria.</title>
        <authorList>
            <person name="Po-Wen C."/>
            <person name="Singh P."/>
            <person name="Zimmerli L."/>
        </authorList>
    </citation>
    <scope>INDUCTION</scope>
</reference>
<reference key="8">
    <citation type="journal article" date="2013" name="Plant Signal. Behav.">
        <title>The Arabidopsis LECTIN RECEPTOR KINASE-VI.2 is a functional protein kinase and is dispensable for basal resistance to Botrytis cinerea.</title>
        <authorList>
            <person name="Singh P."/>
            <person name="Chien C.C."/>
            <person name="Mishra S."/>
            <person name="Tsai C.H."/>
            <person name="Zimmerli L."/>
        </authorList>
    </citation>
    <scope>INDUCTION BY BOTRYTIS CINEREA</scope>
</reference>
<comment type="function">
    <text evidence="2">May play a role in plant immunity.</text>
</comment>
<comment type="subcellular location">
    <subcellularLocation>
        <location evidence="1">Cell membrane</location>
        <topology evidence="3">Single-pass membrane protein</topology>
    </subcellularLocation>
</comment>
<comment type="tissue specificity">
    <text evidence="5 6">Expressed in senescing leaves.</text>
</comment>
<comment type="developmental stage">
    <text evidence="5">Up-regulated in leaves during natural senescence.</text>
</comment>
<comment type="induction">
    <text evidence="5 6 7 8">By ethylene, abscisic acid (ABA), beta-aminobutyric acid (BABA), spermine, dark and infection with the cucumber mosaic virus (CMV) (PubMed:11230571, PubMed:14666423, PubMed:22947164). Induced by infection with the fungal pathogen Botrytis cinerea (PubMed:23221759).</text>
</comment>
<accession>Q9SJ52</accession>